<gene>
    <name evidence="1" type="primary">queA</name>
    <name type="ordered locus">HPG27_366</name>
</gene>
<reference key="1">
    <citation type="journal article" date="2009" name="J. Bacteriol.">
        <title>The complete genome sequence of Helicobacter pylori strain G27.</title>
        <authorList>
            <person name="Baltrus D.A."/>
            <person name="Amieva M.R."/>
            <person name="Covacci A."/>
            <person name="Lowe T.M."/>
            <person name="Merrell D.S."/>
            <person name="Ottemann K.M."/>
            <person name="Stein M."/>
            <person name="Salama N.R."/>
            <person name="Guillemin K."/>
        </authorList>
    </citation>
    <scope>NUCLEOTIDE SEQUENCE [LARGE SCALE GENOMIC DNA]</scope>
    <source>
        <strain>G27</strain>
    </source>
</reference>
<organism>
    <name type="scientific">Helicobacter pylori (strain G27)</name>
    <dbReference type="NCBI Taxonomy" id="563041"/>
    <lineage>
        <taxon>Bacteria</taxon>
        <taxon>Pseudomonadati</taxon>
        <taxon>Campylobacterota</taxon>
        <taxon>Epsilonproteobacteria</taxon>
        <taxon>Campylobacterales</taxon>
        <taxon>Helicobacteraceae</taxon>
        <taxon>Helicobacter</taxon>
    </lineage>
</organism>
<dbReference type="EC" id="2.4.99.17" evidence="1"/>
<dbReference type="EMBL" id="CP001173">
    <property type="protein sequence ID" value="ACI27132.1"/>
    <property type="molecule type" value="Genomic_DNA"/>
</dbReference>
<dbReference type="RefSeq" id="WP_000657414.1">
    <property type="nucleotide sequence ID" value="NC_011333.1"/>
</dbReference>
<dbReference type="SMR" id="B5ZAF2"/>
<dbReference type="KEGG" id="hpg:HPG27_366"/>
<dbReference type="HOGENOM" id="CLU_039110_1_0_7"/>
<dbReference type="UniPathway" id="UPA00392"/>
<dbReference type="Proteomes" id="UP000001735">
    <property type="component" value="Chromosome"/>
</dbReference>
<dbReference type="GO" id="GO:0005737">
    <property type="term" value="C:cytoplasm"/>
    <property type="evidence" value="ECO:0007669"/>
    <property type="project" value="UniProtKB-SubCell"/>
</dbReference>
<dbReference type="GO" id="GO:0051075">
    <property type="term" value="F:S-adenosylmethionine:tRNA ribosyltransferase-isomerase activity"/>
    <property type="evidence" value="ECO:0007669"/>
    <property type="project" value="UniProtKB-EC"/>
</dbReference>
<dbReference type="GO" id="GO:0008616">
    <property type="term" value="P:queuosine biosynthetic process"/>
    <property type="evidence" value="ECO:0007669"/>
    <property type="project" value="UniProtKB-UniRule"/>
</dbReference>
<dbReference type="GO" id="GO:0002099">
    <property type="term" value="P:tRNA wobble guanine modification"/>
    <property type="evidence" value="ECO:0007669"/>
    <property type="project" value="TreeGrafter"/>
</dbReference>
<dbReference type="FunFam" id="2.40.10.240:FF:000005">
    <property type="entry name" value="S-adenosylmethionine:tRNA ribosyltransferase-isomerase"/>
    <property type="match status" value="1"/>
</dbReference>
<dbReference type="Gene3D" id="2.40.10.240">
    <property type="entry name" value="QueA-like"/>
    <property type="match status" value="1"/>
</dbReference>
<dbReference type="Gene3D" id="3.40.1780.10">
    <property type="entry name" value="QueA-like"/>
    <property type="match status" value="1"/>
</dbReference>
<dbReference type="HAMAP" id="MF_00113">
    <property type="entry name" value="QueA"/>
    <property type="match status" value="1"/>
</dbReference>
<dbReference type="InterPro" id="IPR003699">
    <property type="entry name" value="QueA"/>
</dbReference>
<dbReference type="InterPro" id="IPR042118">
    <property type="entry name" value="QueA_dom1"/>
</dbReference>
<dbReference type="InterPro" id="IPR042119">
    <property type="entry name" value="QueA_dom2"/>
</dbReference>
<dbReference type="InterPro" id="IPR036100">
    <property type="entry name" value="QueA_sf"/>
</dbReference>
<dbReference type="NCBIfam" id="NF001140">
    <property type="entry name" value="PRK00147.1"/>
    <property type="match status" value="1"/>
</dbReference>
<dbReference type="NCBIfam" id="TIGR00113">
    <property type="entry name" value="queA"/>
    <property type="match status" value="1"/>
</dbReference>
<dbReference type="PANTHER" id="PTHR30307">
    <property type="entry name" value="S-ADENOSYLMETHIONINE:TRNA RIBOSYLTRANSFERASE-ISOMERASE"/>
    <property type="match status" value="1"/>
</dbReference>
<dbReference type="PANTHER" id="PTHR30307:SF0">
    <property type="entry name" value="S-ADENOSYLMETHIONINE:TRNA RIBOSYLTRANSFERASE-ISOMERASE"/>
    <property type="match status" value="1"/>
</dbReference>
<dbReference type="Pfam" id="PF02547">
    <property type="entry name" value="Queuosine_synth"/>
    <property type="match status" value="1"/>
</dbReference>
<dbReference type="SUPFAM" id="SSF111337">
    <property type="entry name" value="QueA-like"/>
    <property type="match status" value="1"/>
</dbReference>
<keyword id="KW-0963">Cytoplasm</keyword>
<keyword id="KW-0671">Queuosine biosynthesis</keyword>
<keyword id="KW-1185">Reference proteome</keyword>
<keyword id="KW-0949">S-adenosyl-L-methionine</keyword>
<keyword id="KW-0808">Transferase</keyword>
<protein>
    <recommendedName>
        <fullName evidence="1">S-adenosylmethionine:tRNA ribosyltransferase-isomerase</fullName>
        <ecNumber evidence="1">2.4.99.17</ecNumber>
    </recommendedName>
    <alternativeName>
        <fullName evidence="1">Queuosine biosynthesis protein QueA</fullName>
    </alternativeName>
</protein>
<evidence type="ECO:0000255" key="1">
    <source>
        <dbReference type="HAMAP-Rule" id="MF_00113"/>
    </source>
</evidence>
<accession>B5ZAF2</accession>
<sequence length="345" mass="40013">MKEFDLESYDYYLPKELIANYPVLPKEKAKLLVYERRSQTITHTTFEHVLDFFPKNALIVLNDTKVMKARLFGSKHAFLPSKTTEVFFHRFFKDNTALTQIKGKIKVGDKIFFDENYYAEVLELLHNGQRLIAFYDNQTPLNQENILKLLEQYGHMPLPPYIKRADESLDAHEYQSVFAKHTGAVAAPTASLHFSQHGLEKLLKDFKHAFLTLHVGAGTFLGVETKDIREHQIHTEVLRIPKKSQEILQKSQEILCIGTTALRSVEYFKRLENPNQEAFECDIFLHLANPILHVNYLLTNFHLPKSSLLMLVSAMIGLEKTKEIYKIAIEKKYRFYSYGDGMLIL</sequence>
<proteinExistence type="inferred from homology"/>
<comment type="function">
    <text evidence="1">Transfers and isomerizes the ribose moiety from AdoMet to the 7-aminomethyl group of 7-deazaguanine (preQ1-tRNA) to give epoxyqueuosine (oQ-tRNA).</text>
</comment>
<comment type="catalytic activity">
    <reaction evidence="1">
        <text>7-aminomethyl-7-carbaguanosine(34) in tRNA + S-adenosyl-L-methionine = epoxyqueuosine(34) in tRNA + adenine + L-methionine + 2 H(+)</text>
        <dbReference type="Rhea" id="RHEA:32155"/>
        <dbReference type="Rhea" id="RHEA-COMP:10342"/>
        <dbReference type="Rhea" id="RHEA-COMP:18582"/>
        <dbReference type="ChEBI" id="CHEBI:15378"/>
        <dbReference type="ChEBI" id="CHEBI:16708"/>
        <dbReference type="ChEBI" id="CHEBI:57844"/>
        <dbReference type="ChEBI" id="CHEBI:59789"/>
        <dbReference type="ChEBI" id="CHEBI:82833"/>
        <dbReference type="ChEBI" id="CHEBI:194443"/>
        <dbReference type="EC" id="2.4.99.17"/>
    </reaction>
</comment>
<comment type="pathway">
    <text evidence="1">tRNA modification; tRNA-queuosine biosynthesis.</text>
</comment>
<comment type="subunit">
    <text evidence="1">Monomer.</text>
</comment>
<comment type="subcellular location">
    <subcellularLocation>
        <location evidence="1">Cytoplasm</location>
    </subcellularLocation>
</comment>
<comment type="similarity">
    <text evidence="1">Belongs to the QueA family.</text>
</comment>
<name>QUEA_HELPG</name>
<feature type="chain" id="PRO_1000094783" description="S-adenosylmethionine:tRNA ribosyltransferase-isomerase">
    <location>
        <begin position="1"/>
        <end position="345"/>
    </location>
</feature>